<sequence>MAEGGFDPCECVCSHEHAMRRLINLLRQSQSYCTDTECLQELPGPSGDNGISVTMILVAWMVIALILFLLRPPNLRGSSLPGKPTSPHNGQDPPAPPVD</sequence>
<gene>
    <name type="primary">SMIM14</name>
    <name type="synonym">C4orf34</name>
</gene>
<evidence type="ECO:0000255" key="1"/>
<evidence type="ECO:0000256" key="2">
    <source>
        <dbReference type="SAM" id="MobiDB-lite"/>
    </source>
</evidence>
<evidence type="ECO:0000269" key="3">
    <source>
    </source>
</evidence>
<name>SIM14_HUMAN</name>
<dbReference type="EMBL" id="BC008502">
    <property type="protein sequence ID" value="AAH08502.1"/>
    <property type="molecule type" value="mRNA"/>
</dbReference>
<dbReference type="CCDS" id="CCDS3456.1"/>
<dbReference type="RefSeq" id="NP_001304825.1">
    <property type="nucleotide sequence ID" value="NM_001317896.2"/>
</dbReference>
<dbReference type="RefSeq" id="NP_001304826.1">
    <property type="nucleotide sequence ID" value="NM_001317897.2"/>
</dbReference>
<dbReference type="RefSeq" id="NP_777581.1">
    <property type="nucleotide sequence ID" value="NM_174921.3"/>
</dbReference>
<dbReference type="RefSeq" id="XP_016863351.1">
    <property type="nucleotide sequence ID" value="XM_017007862.1"/>
</dbReference>
<dbReference type="RefSeq" id="XP_016863352.1">
    <property type="nucleotide sequence ID" value="XM_017007863.1"/>
</dbReference>
<dbReference type="RefSeq" id="XP_047305700.1">
    <property type="nucleotide sequence ID" value="XM_047449744.1"/>
</dbReference>
<dbReference type="RefSeq" id="XP_047305701.1">
    <property type="nucleotide sequence ID" value="XM_047449745.1"/>
</dbReference>
<dbReference type="RefSeq" id="XP_047305702.1">
    <property type="nucleotide sequence ID" value="XM_047449746.1"/>
</dbReference>
<dbReference type="RefSeq" id="XP_054205139.1">
    <property type="nucleotide sequence ID" value="XM_054349164.1"/>
</dbReference>
<dbReference type="RefSeq" id="XP_054205140.1">
    <property type="nucleotide sequence ID" value="XM_054349165.1"/>
</dbReference>
<dbReference type="BioGRID" id="128406">
    <property type="interactions" value="6"/>
</dbReference>
<dbReference type="FunCoup" id="Q96QK8">
    <property type="interactions" value="1235"/>
</dbReference>
<dbReference type="IntAct" id="Q96QK8">
    <property type="interactions" value="6"/>
</dbReference>
<dbReference type="MINT" id="Q96QK8"/>
<dbReference type="STRING" id="9606.ENSP00000295958"/>
<dbReference type="iPTMnet" id="Q96QK8"/>
<dbReference type="PhosphoSitePlus" id="Q96QK8"/>
<dbReference type="BioMuta" id="SMIM14"/>
<dbReference type="DMDM" id="74732680"/>
<dbReference type="jPOST" id="Q96QK8"/>
<dbReference type="MassIVE" id="Q96QK8"/>
<dbReference type="PaxDb" id="9606-ENSP00000295958"/>
<dbReference type="PeptideAtlas" id="Q96QK8"/>
<dbReference type="ProteomicsDB" id="77885"/>
<dbReference type="Antibodypedia" id="54789">
    <property type="antibodies" value="103 antibodies from 13 providers"/>
</dbReference>
<dbReference type="DNASU" id="201895"/>
<dbReference type="Ensembl" id="ENST00000295958.10">
    <property type="protein sequence ID" value="ENSP00000295958.4"/>
    <property type="gene ID" value="ENSG00000163683.12"/>
</dbReference>
<dbReference type="GeneID" id="201895"/>
<dbReference type="KEGG" id="hsa:201895"/>
<dbReference type="MANE-Select" id="ENST00000295958.10">
    <property type="protein sequence ID" value="ENSP00000295958.4"/>
    <property type="RefSeq nucleotide sequence ID" value="NM_174921.3"/>
    <property type="RefSeq protein sequence ID" value="NP_777581.1"/>
</dbReference>
<dbReference type="UCSC" id="uc003guo.4">
    <property type="organism name" value="human"/>
</dbReference>
<dbReference type="AGR" id="HGNC:27321"/>
<dbReference type="CTD" id="201895"/>
<dbReference type="DisGeNET" id="201895"/>
<dbReference type="GeneCards" id="SMIM14"/>
<dbReference type="HGNC" id="HGNC:27321">
    <property type="gene designation" value="SMIM14"/>
</dbReference>
<dbReference type="HPA" id="ENSG00000163683">
    <property type="expression patterns" value="Tissue enhanced (liver)"/>
</dbReference>
<dbReference type="neXtProt" id="NX_Q96QK8"/>
<dbReference type="OpenTargets" id="ENSG00000163683"/>
<dbReference type="PharmGKB" id="PA162379760"/>
<dbReference type="VEuPathDB" id="HostDB:ENSG00000163683"/>
<dbReference type="eggNOG" id="ENOG502S28C">
    <property type="taxonomic scope" value="Eukaryota"/>
</dbReference>
<dbReference type="GeneTree" id="ENSGT00390000018294"/>
<dbReference type="HOGENOM" id="CLU_152284_0_0_1"/>
<dbReference type="InParanoid" id="Q96QK8"/>
<dbReference type="OMA" id="ACTDTEC"/>
<dbReference type="OrthoDB" id="10054061at2759"/>
<dbReference type="PAN-GO" id="Q96QK8">
    <property type="GO annotations" value="1 GO annotation based on evolutionary models"/>
</dbReference>
<dbReference type="PhylomeDB" id="Q96QK8"/>
<dbReference type="TreeFam" id="TF314023"/>
<dbReference type="PathwayCommons" id="Q96QK8"/>
<dbReference type="SignaLink" id="Q96QK8"/>
<dbReference type="BioGRID-ORCS" id="201895">
    <property type="hits" value="12 hits in 1115 CRISPR screens"/>
</dbReference>
<dbReference type="ChiTaRS" id="SMIM14">
    <property type="organism name" value="human"/>
</dbReference>
<dbReference type="GenomeRNAi" id="201895"/>
<dbReference type="Pharos" id="Q96QK8">
    <property type="development level" value="Tdark"/>
</dbReference>
<dbReference type="PRO" id="PR:Q96QK8"/>
<dbReference type="Proteomes" id="UP000005640">
    <property type="component" value="Chromosome 4"/>
</dbReference>
<dbReference type="RNAct" id="Q96QK8">
    <property type="molecule type" value="protein"/>
</dbReference>
<dbReference type="Bgee" id="ENSG00000163683">
    <property type="expression patterns" value="Expressed in corpus epididymis and 195 other cell types or tissues"/>
</dbReference>
<dbReference type="ExpressionAtlas" id="Q96QK8">
    <property type="expression patterns" value="baseline and differential"/>
</dbReference>
<dbReference type="GO" id="GO:0005783">
    <property type="term" value="C:endoplasmic reticulum"/>
    <property type="evidence" value="ECO:0000314"/>
    <property type="project" value="UniProtKB"/>
</dbReference>
<dbReference type="GO" id="GO:0005789">
    <property type="term" value="C:endoplasmic reticulum membrane"/>
    <property type="evidence" value="ECO:0007669"/>
    <property type="project" value="UniProtKB-SubCell"/>
</dbReference>
<dbReference type="GO" id="GO:0001835">
    <property type="term" value="P:blastocyst hatching"/>
    <property type="evidence" value="ECO:0007669"/>
    <property type="project" value="Ensembl"/>
</dbReference>
<dbReference type="InterPro" id="IPR020309">
    <property type="entry name" value="Uncharacterised_CD034/YQF4"/>
</dbReference>
<dbReference type="PANTHER" id="PTHR31019">
    <property type="entry name" value="SMALL INTEGRAL MEMBRANE PROTEIN 14"/>
    <property type="match status" value="1"/>
</dbReference>
<dbReference type="PANTHER" id="PTHR31019:SF1">
    <property type="entry name" value="SMALL INTEGRAL MEMBRANE PROTEIN 14"/>
    <property type="match status" value="1"/>
</dbReference>
<dbReference type="Pfam" id="PF11027">
    <property type="entry name" value="DUF2615"/>
    <property type="match status" value="1"/>
</dbReference>
<protein>
    <recommendedName>
        <fullName>Small integral membrane protein 14</fullName>
    </recommendedName>
</protein>
<organism>
    <name type="scientific">Homo sapiens</name>
    <name type="common">Human</name>
    <dbReference type="NCBI Taxonomy" id="9606"/>
    <lineage>
        <taxon>Eukaryota</taxon>
        <taxon>Metazoa</taxon>
        <taxon>Chordata</taxon>
        <taxon>Craniata</taxon>
        <taxon>Vertebrata</taxon>
        <taxon>Euteleostomi</taxon>
        <taxon>Mammalia</taxon>
        <taxon>Eutheria</taxon>
        <taxon>Euarchontoglires</taxon>
        <taxon>Primates</taxon>
        <taxon>Haplorrhini</taxon>
        <taxon>Catarrhini</taxon>
        <taxon>Hominidae</taxon>
        <taxon>Homo</taxon>
    </lineage>
</organism>
<proteinExistence type="evidence at protein level"/>
<feature type="chain" id="PRO_0000268816" description="Small integral membrane protein 14">
    <location>
        <begin position="1"/>
        <end position="99"/>
    </location>
</feature>
<feature type="topological domain" description="Lumenal" evidence="1">
    <location>
        <begin position="1"/>
        <end position="49"/>
    </location>
</feature>
<feature type="transmembrane region" description="Helical" evidence="1">
    <location>
        <begin position="50"/>
        <end position="70"/>
    </location>
</feature>
<feature type="topological domain" description="Cytoplasmic" evidence="1">
    <location>
        <begin position="71"/>
        <end position="99"/>
    </location>
</feature>
<feature type="region of interest" description="Disordered" evidence="2">
    <location>
        <begin position="78"/>
        <end position="99"/>
    </location>
</feature>
<feature type="mutagenesis site" description="In N-gly,N; creates a N-glycosylation site." evidence="3">
    <original>LR</original>
    <variation>TN</variation>
    <location>
        <begin position="26"/>
        <end position="27"/>
    </location>
</feature>
<feature type="mutagenesis site" description="In N-gly,C; does not create a N-glycosylation site." evidence="3">
    <original>RG</original>
    <variation>TN</variation>
    <location>
        <begin position="76"/>
        <end position="77"/>
    </location>
</feature>
<keyword id="KW-0256">Endoplasmic reticulum</keyword>
<keyword id="KW-0472">Membrane</keyword>
<keyword id="KW-1267">Proteomics identification</keyword>
<keyword id="KW-1185">Reference proteome</keyword>
<keyword id="KW-0812">Transmembrane</keyword>
<keyword id="KW-1133">Transmembrane helix</keyword>
<reference key="1">
    <citation type="journal article" date="2004" name="Genome Res.">
        <title>The status, quality, and expansion of the NIH full-length cDNA project: the Mammalian Gene Collection (MGC).</title>
        <authorList>
            <consortium name="The MGC Project Team"/>
        </authorList>
    </citation>
    <scope>NUCLEOTIDE SEQUENCE [LARGE SCALE MRNA]</scope>
    <source>
        <tissue>Prostate</tissue>
    </source>
</reference>
<reference key="2">
    <citation type="journal article" date="2014" name="BMB Rep.">
        <title>Characterization of the cellular localization of C4orf34 as a novel endoplasmic reticulum resident protein.</title>
        <authorList>
            <person name="Jun M.H."/>
            <person name="Jun Y.W."/>
            <person name="Kim K.H."/>
            <person name="Lee J.A."/>
            <person name="Jang D.J."/>
        </authorList>
    </citation>
    <scope>SUBCELLULAR LOCATION</scope>
    <scope>TOPOLOGY</scope>
    <scope>MUTAGENESIS OF 26-LEU-ARG-27 AND 76-ARG-GLY-77</scope>
</reference>
<accession>Q96QK8</accession>
<comment type="interaction">
    <interactant intactId="EBI-373430">
        <id>Q96QK8</id>
    </interactant>
    <interactant intactId="EBI-743099">
        <id>Q969F0</id>
        <label>FATE1</label>
    </interactant>
    <organismsDiffer>false</organismsDiffer>
    <experiments>4</experiments>
</comment>
<comment type="interaction">
    <interactant intactId="EBI-373430">
        <id>Q96QK8</id>
    </interactant>
    <interactant intactId="EBI-347996">
        <id>O43765</id>
        <label>SGTA</label>
    </interactant>
    <organismsDiffer>false</organismsDiffer>
    <experiments>3</experiments>
</comment>
<comment type="interaction">
    <interactant intactId="EBI-373430">
        <id>Q96QK8</id>
    </interactant>
    <interactant intactId="EBI-355293">
        <id>P03973</id>
        <label>SLPI</label>
    </interactant>
    <organismsDiffer>false</organismsDiffer>
    <experiments>3</experiments>
</comment>
<comment type="interaction">
    <interactant intactId="EBI-373430">
        <id>Q96QK8</id>
    </interactant>
    <interactant intactId="EBI-5235340">
        <id>Q7Z699</id>
        <label>SPRED1</label>
    </interactant>
    <organismsDiffer>false</organismsDiffer>
    <experiments>3</experiments>
</comment>
<comment type="interaction">
    <interactant intactId="EBI-373430">
        <id>Q96QK8</id>
    </interactant>
    <interactant intactId="EBI-12038591">
        <id>Q69YG0</id>
        <label>TMEM42</label>
    </interactant>
    <organismsDiffer>false</organismsDiffer>
    <experiments>3</experiments>
</comment>
<comment type="subcellular location">
    <subcellularLocation>
        <location evidence="3">Endoplasmic reticulum membrane</location>
        <topology evidence="3">Single-pass membrane protein</topology>
    </subcellularLocation>
</comment>